<keyword id="KW-0025">Alternative splicing</keyword>
<keyword id="KW-0106">Calcium</keyword>
<keyword id="KW-0107">Calcium channel</keyword>
<keyword id="KW-0109">Calcium transport</keyword>
<keyword id="KW-1003">Cell membrane</keyword>
<keyword id="KW-1015">Disulfide bond</keyword>
<keyword id="KW-0325">Glycoprotein</keyword>
<keyword id="KW-0407">Ion channel</keyword>
<keyword id="KW-0406">Ion transport</keyword>
<keyword id="KW-0472">Membrane</keyword>
<keyword id="KW-0479">Metal-binding</keyword>
<keyword id="KW-0597">Phosphoprotein</keyword>
<keyword id="KW-1185">Reference proteome</keyword>
<keyword id="KW-0732">Signal</keyword>
<keyword id="KW-0812">Transmembrane</keyword>
<keyword id="KW-1133">Transmembrane helix</keyword>
<keyword id="KW-0813">Transport</keyword>
<keyword id="KW-0851">Voltage-gated channel</keyword>
<reference key="1">
    <citation type="journal article" date="1992" name="Proc. Natl. Acad. Sci. U.S.A.">
        <title>Rat brain expresses an alternatively spliced form of the dihydropyridine-sensitive L-type calcium channel alpha 2 subunit.</title>
        <authorList>
            <person name="Kim H.L."/>
            <person name="Kim H."/>
            <person name="Lee P."/>
            <person name="King R.G."/>
            <person name="Chin H."/>
        </authorList>
    </citation>
    <scope>NUCLEOTIDE SEQUENCE [MRNA]</scope>
</reference>
<reference key="2">
    <citation type="journal article" date="2012" name="Nat. Commun.">
        <title>Quantitative maps of protein phosphorylation sites across 14 different rat organs and tissues.</title>
        <authorList>
            <person name="Lundby A."/>
            <person name="Secher A."/>
            <person name="Lage K."/>
            <person name="Nordsborg N.B."/>
            <person name="Dmytriyev A."/>
            <person name="Lundby C."/>
            <person name="Olsen J.V."/>
        </authorList>
    </citation>
    <scope>PHOSPHORYLATION [LARGE SCALE ANALYSIS] AT SER-119</scope>
    <scope>IDENTIFICATION BY MASS SPECTROMETRY [LARGE SCALE ANALYSIS]</scope>
</reference>
<reference key="3">
    <citation type="journal article" date="2013" name="J. Proteome Res.">
        <title>Site-specific glycan-peptide analysis for determination of N-glycoproteome heterogeneity.</title>
        <authorList>
            <person name="Parker B.L."/>
            <person name="Thaysen-Andersen M."/>
            <person name="Solis N."/>
            <person name="Scott N.E."/>
            <person name="Larsen M.R."/>
            <person name="Graham M.E."/>
            <person name="Packer N.H."/>
            <person name="Cordwell S.J."/>
        </authorList>
    </citation>
    <scope>GLYCOSYLATION [LARGE SCALE ANALYSIS] AT ASN-323 AND ASN-973</scope>
    <scope>IDENTIFICATION BY MASS SPECTROMETRY [LARGE SCALE ANALYSIS]</scope>
    <source>
        <tissue>Brain</tissue>
    </source>
</reference>
<accession>P54290</accession>
<proteinExistence type="evidence at protein level"/>
<organism>
    <name type="scientific">Rattus norvegicus</name>
    <name type="common">Rat</name>
    <dbReference type="NCBI Taxonomy" id="10116"/>
    <lineage>
        <taxon>Eukaryota</taxon>
        <taxon>Metazoa</taxon>
        <taxon>Chordata</taxon>
        <taxon>Craniata</taxon>
        <taxon>Vertebrata</taxon>
        <taxon>Euteleostomi</taxon>
        <taxon>Mammalia</taxon>
        <taxon>Eutheria</taxon>
        <taxon>Euarchontoglires</taxon>
        <taxon>Glires</taxon>
        <taxon>Rodentia</taxon>
        <taxon>Myomorpha</taxon>
        <taxon>Muroidea</taxon>
        <taxon>Muridae</taxon>
        <taxon>Murinae</taxon>
        <taxon>Rattus</taxon>
    </lineage>
</organism>
<evidence type="ECO:0000250" key="1"/>
<evidence type="ECO:0000250" key="2">
    <source>
        <dbReference type="UniProtKB" id="P54289"/>
    </source>
</evidence>
<evidence type="ECO:0000255" key="3"/>
<evidence type="ECO:0000255" key="4">
    <source>
        <dbReference type="PROSITE-ProRule" id="PRU00219"/>
    </source>
</evidence>
<evidence type="ECO:0000305" key="5"/>
<evidence type="ECO:0007744" key="6">
    <source>
    </source>
</evidence>
<evidence type="ECO:0007744" key="7">
    <source>
    </source>
</evidence>
<dbReference type="EMBL" id="M86621">
    <property type="protein sequence ID" value="AAA41088.1"/>
    <property type="molecule type" value="mRNA"/>
</dbReference>
<dbReference type="PIR" id="A44147">
    <property type="entry name" value="A44147"/>
</dbReference>
<dbReference type="SMR" id="P54290"/>
<dbReference type="FunCoup" id="P54290">
    <property type="interactions" value="674"/>
</dbReference>
<dbReference type="IntAct" id="P54290">
    <property type="interactions" value="4"/>
</dbReference>
<dbReference type="MINT" id="P54290"/>
<dbReference type="STRING" id="10116.ENSRNOP00000034572"/>
<dbReference type="BindingDB" id="P54290"/>
<dbReference type="ChEMBL" id="CHEMBL3420"/>
<dbReference type="GlyCosmos" id="P54290">
    <property type="glycosylation" value="9 sites, 11 glycans"/>
</dbReference>
<dbReference type="GlyGen" id="P54290">
    <property type="glycosylation" value="9 sites, 11 N-linked glycans (2 sites)"/>
</dbReference>
<dbReference type="iPTMnet" id="P54290"/>
<dbReference type="PhosphoSitePlus" id="P54290"/>
<dbReference type="SwissPalm" id="P54290"/>
<dbReference type="jPOST" id="P54290"/>
<dbReference type="PaxDb" id="10116-ENSRNOP00000034572"/>
<dbReference type="AGR" id="RGD:2247"/>
<dbReference type="RGD" id="2247">
    <property type="gene designation" value="Cacna2d1"/>
</dbReference>
<dbReference type="eggNOG" id="KOG2353">
    <property type="taxonomic scope" value="Eukaryota"/>
</dbReference>
<dbReference type="InParanoid" id="P54290"/>
<dbReference type="PhylomeDB" id="P54290"/>
<dbReference type="PRO" id="PR:P54290"/>
<dbReference type="Proteomes" id="UP000002494">
    <property type="component" value="Unplaced"/>
</dbReference>
<dbReference type="GO" id="GO:0098982">
    <property type="term" value="C:GABA-ergic synapse"/>
    <property type="evidence" value="ECO:0000266"/>
    <property type="project" value="RGD"/>
</dbReference>
<dbReference type="GO" id="GO:0098978">
    <property type="term" value="C:glutamatergic synapse"/>
    <property type="evidence" value="ECO:0000314"/>
    <property type="project" value="SynGO"/>
</dbReference>
<dbReference type="GO" id="GO:1990454">
    <property type="term" value="C:L-type voltage-gated calcium channel complex"/>
    <property type="evidence" value="ECO:0000314"/>
    <property type="project" value="BHF-UCL"/>
</dbReference>
<dbReference type="GO" id="GO:0098992">
    <property type="term" value="C:neuronal dense core vesicle"/>
    <property type="evidence" value="ECO:0000266"/>
    <property type="project" value="RGD"/>
</dbReference>
<dbReference type="GO" id="GO:0005886">
    <property type="term" value="C:plasma membrane"/>
    <property type="evidence" value="ECO:0000266"/>
    <property type="project" value="RGD"/>
</dbReference>
<dbReference type="GO" id="GO:0045211">
    <property type="term" value="C:postsynaptic membrane"/>
    <property type="evidence" value="ECO:0000314"/>
    <property type="project" value="SynGO"/>
</dbReference>
<dbReference type="GO" id="GO:0048787">
    <property type="term" value="C:presynaptic active zone membrane"/>
    <property type="evidence" value="ECO:0000314"/>
    <property type="project" value="SynGO"/>
</dbReference>
<dbReference type="GO" id="GO:0016529">
    <property type="term" value="C:sarcoplasmic reticulum"/>
    <property type="evidence" value="ECO:0000266"/>
    <property type="project" value="RGD"/>
</dbReference>
<dbReference type="GO" id="GO:0030315">
    <property type="term" value="C:T-tubule"/>
    <property type="evidence" value="ECO:0000266"/>
    <property type="project" value="RGD"/>
</dbReference>
<dbReference type="GO" id="GO:0005891">
    <property type="term" value="C:voltage-gated calcium channel complex"/>
    <property type="evidence" value="ECO:0000314"/>
    <property type="project" value="RGD"/>
</dbReference>
<dbReference type="GO" id="GO:0046872">
    <property type="term" value="F:metal ion binding"/>
    <property type="evidence" value="ECO:0007669"/>
    <property type="project" value="UniProtKB-KW"/>
</dbReference>
<dbReference type="GO" id="GO:0005245">
    <property type="term" value="F:voltage-gated calcium channel activity"/>
    <property type="evidence" value="ECO:0000315"/>
    <property type="project" value="RGD"/>
</dbReference>
<dbReference type="GO" id="GO:0070588">
    <property type="term" value="P:calcium ion transmembrane transport"/>
    <property type="evidence" value="ECO:0000314"/>
    <property type="project" value="BHF-UCL"/>
</dbReference>
<dbReference type="GO" id="GO:0061577">
    <property type="term" value="P:calcium ion transmembrane transport via high voltage-gated calcium channel"/>
    <property type="evidence" value="ECO:0000314"/>
    <property type="project" value="BHF-UCL"/>
</dbReference>
<dbReference type="GO" id="GO:0006816">
    <property type="term" value="P:calcium ion transport"/>
    <property type="evidence" value="ECO:0000266"/>
    <property type="project" value="RGD"/>
</dbReference>
<dbReference type="GO" id="GO:0060402">
    <property type="term" value="P:calcium ion transport into cytosol"/>
    <property type="evidence" value="ECO:0000314"/>
    <property type="project" value="BHF-UCL"/>
</dbReference>
<dbReference type="GO" id="GO:0086002">
    <property type="term" value="P:cardiac muscle cell action potential involved in contraction"/>
    <property type="evidence" value="ECO:0000266"/>
    <property type="project" value="RGD"/>
</dbReference>
<dbReference type="GO" id="GO:1904646">
    <property type="term" value="P:cellular response to amyloid-beta"/>
    <property type="evidence" value="ECO:0000266"/>
    <property type="project" value="RGD"/>
</dbReference>
<dbReference type="GO" id="GO:0086048">
    <property type="term" value="P:membrane depolarization during bundle of His cell action potential"/>
    <property type="evidence" value="ECO:0000266"/>
    <property type="project" value="RGD"/>
</dbReference>
<dbReference type="GO" id="GO:1902514">
    <property type="term" value="P:regulation of calcium ion transmembrane transport via high voltage-gated calcium channel"/>
    <property type="evidence" value="ECO:0000266"/>
    <property type="project" value="RGD"/>
</dbReference>
<dbReference type="GO" id="GO:0051924">
    <property type="term" value="P:regulation of calcium ion transport"/>
    <property type="evidence" value="ECO:0000266"/>
    <property type="project" value="RGD"/>
</dbReference>
<dbReference type="GO" id="GO:0086091">
    <property type="term" value="P:regulation of heart rate by cardiac conduction"/>
    <property type="evidence" value="ECO:0000266"/>
    <property type="project" value="RGD"/>
</dbReference>
<dbReference type="GO" id="GO:0098903">
    <property type="term" value="P:regulation of membrane repolarization during action potential"/>
    <property type="evidence" value="ECO:0000314"/>
    <property type="project" value="BHF-UCL"/>
</dbReference>
<dbReference type="GO" id="GO:0060307">
    <property type="term" value="P:regulation of ventricular cardiac muscle cell membrane repolarization"/>
    <property type="evidence" value="ECO:0000266"/>
    <property type="project" value="RGD"/>
</dbReference>
<dbReference type="CDD" id="cd01463">
    <property type="entry name" value="vWA_VGCC_like"/>
    <property type="match status" value="1"/>
</dbReference>
<dbReference type="FunFam" id="3.30.450.20:FF:000014">
    <property type="entry name" value="voltage-dependent calcium channel subunit alpha-2/delta-1 isoform X1"/>
    <property type="match status" value="1"/>
</dbReference>
<dbReference type="FunFam" id="3.40.50.410:FF:000006">
    <property type="entry name" value="voltage-dependent calcium channel subunit alpha-2/delta-1 isoform X1"/>
    <property type="match status" value="1"/>
</dbReference>
<dbReference type="Gene3D" id="3.30.450.20">
    <property type="entry name" value="PAS domain"/>
    <property type="match status" value="1"/>
</dbReference>
<dbReference type="Gene3D" id="3.40.50.410">
    <property type="entry name" value="von Willebrand factor, type A domain"/>
    <property type="match status" value="1"/>
</dbReference>
<dbReference type="InterPro" id="IPR051173">
    <property type="entry name" value="Ca_channel_alpha-2/delta"/>
</dbReference>
<dbReference type="InterPro" id="IPR013680">
    <property type="entry name" value="VDCC_a2/dsu"/>
</dbReference>
<dbReference type="InterPro" id="IPR013608">
    <property type="entry name" value="VWA_N"/>
</dbReference>
<dbReference type="InterPro" id="IPR002035">
    <property type="entry name" value="VWF_A"/>
</dbReference>
<dbReference type="InterPro" id="IPR036465">
    <property type="entry name" value="vWFA_dom_sf"/>
</dbReference>
<dbReference type="PANTHER" id="PTHR10166">
    <property type="entry name" value="VOLTAGE-DEPENDENT CALCIUM CHANNEL SUBUNIT ALPHA-2/DELTA-RELATED"/>
    <property type="match status" value="1"/>
</dbReference>
<dbReference type="PANTHER" id="PTHR10166:SF6">
    <property type="entry name" value="VOLTAGE-DEPENDENT CALCIUM CHANNEL SUBUNIT ALPHA-2_DELTA-1"/>
    <property type="match status" value="1"/>
</dbReference>
<dbReference type="Pfam" id="PF08473">
    <property type="entry name" value="VGCC_alpha2"/>
    <property type="match status" value="1"/>
</dbReference>
<dbReference type="Pfam" id="PF00092">
    <property type="entry name" value="VWA"/>
    <property type="match status" value="1"/>
</dbReference>
<dbReference type="Pfam" id="PF08399">
    <property type="entry name" value="VWA_N"/>
    <property type="match status" value="1"/>
</dbReference>
<dbReference type="SMART" id="SM00327">
    <property type="entry name" value="VWA"/>
    <property type="match status" value="1"/>
</dbReference>
<dbReference type="SUPFAM" id="SSF53300">
    <property type="entry name" value="vWA-like"/>
    <property type="match status" value="1"/>
</dbReference>
<dbReference type="PROSITE" id="PS50234">
    <property type="entry name" value="VWFA"/>
    <property type="match status" value="1"/>
</dbReference>
<protein>
    <recommendedName>
        <fullName>Voltage-dependent calcium channel subunit alpha-2/delta-1</fullName>
    </recommendedName>
    <alternativeName>
        <fullName>Voltage-gated calcium channel subunit alpha-2/delta-1</fullName>
    </alternativeName>
    <component>
        <recommendedName>
            <fullName>Voltage-dependent calcium channel subunit alpha-2-1</fullName>
        </recommendedName>
    </component>
    <component>
        <recommendedName>
            <fullName>Voltage-dependent calcium channel subunit delta-1</fullName>
        </recommendedName>
    </component>
</protein>
<gene>
    <name type="primary">Cacna2d1</name>
    <name type="synonym">Cacnl2a</name>
    <name type="synonym">Cchl2a</name>
</gene>
<name>CA2D1_RAT</name>
<feature type="signal peptide" evidence="1">
    <location>
        <begin position="1"/>
        <end position="24"/>
    </location>
</feature>
<feature type="chain" id="PRO_0000304635" description="Voltage-dependent calcium channel subunit alpha-2/delta-1">
    <location>
        <begin position="25"/>
        <end position="1091"/>
    </location>
</feature>
<feature type="chain" id="PRO_0000005005" description="Voltage-dependent calcium channel subunit alpha-2-1" evidence="1">
    <location>
        <begin position="25"/>
        <end position="944"/>
    </location>
</feature>
<feature type="chain" id="PRO_0000005006" description="Voltage-dependent calcium channel subunit delta-1" evidence="1">
    <location>
        <begin position="945"/>
        <end position="1091"/>
    </location>
</feature>
<feature type="topological domain" description="Extracellular" evidence="3">
    <location>
        <begin position="25"/>
        <end position="1061"/>
    </location>
</feature>
<feature type="transmembrane region" description="Helical" evidence="3">
    <location>
        <begin position="1062"/>
        <end position="1082"/>
    </location>
</feature>
<feature type="topological domain" description="Cytoplasmic" evidence="3">
    <location>
        <begin position="1083"/>
        <end position="1091"/>
    </location>
</feature>
<feature type="domain" description="VWFA" evidence="4">
    <location>
        <begin position="252"/>
        <end position="429"/>
    </location>
</feature>
<feature type="domain" description="Cache">
    <location>
        <begin position="445"/>
        <end position="536"/>
    </location>
</feature>
<feature type="short sequence motif" description="MIDAS-like motif">
    <location>
        <begin position="258"/>
        <end position="262"/>
    </location>
</feature>
<feature type="binding site" evidence="1">
    <location>
        <position position="258"/>
    </location>
    <ligand>
        <name>a divalent metal cation</name>
        <dbReference type="ChEBI" id="CHEBI:60240"/>
    </ligand>
</feature>
<feature type="binding site" evidence="1">
    <location>
        <position position="260"/>
    </location>
    <ligand>
        <name>a divalent metal cation</name>
        <dbReference type="ChEBI" id="CHEBI:60240"/>
    </ligand>
</feature>
<feature type="binding site" evidence="1">
    <location>
        <position position="262"/>
    </location>
    <ligand>
        <name>a divalent metal cation</name>
        <dbReference type="ChEBI" id="CHEBI:60240"/>
    </ligand>
</feature>
<feature type="modified residue" description="Phosphoserine" evidence="6">
    <location>
        <position position="119"/>
    </location>
</feature>
<feature type="glycosylation site" description="N-linked (GlcNAc...) asparagine" evidence="3">
    <location>
        <position position="92"/>
    </location>
</feature>
<feature type="glycosylation site" description="N-linked (GlcNAc...) asparagine" evidence="3">
    <location>
        <position position="136"/>
    </location>
</feature>
<feature type="glycosylation site" description="N-linked (GlcNAc...) asparagine" evidence="3">
    <location>
        <position position="184"/>
    </location>
</feature>
<feature type="glycosylation site" description="N-linked (GlcNAc...) asparagine" evidence="7">
    <location>
        <position position="323"/>
    </location>
</feature>
<feature type="glycosylation site" description="N-linked (GlcNAc...) asparagine" evidence="3">
    <location>
        <position position="347"/>
    </location>
</feature>
<feature type="glycosylation site" description="N-linked (GlcNAc...) asparagine" evidence="3">
    <location>
        <position position="593"/>
    </location>
</feature>
<feature type="glycosylation site" description="N-linked (GlcNAc...) asparagine" evidence="3">
    <location>
        <position position="769"/>
    </location>
</feature>
<feature type="glycosylation site" description="N-linked (GlcNAc...) asparagine" evidence="3">
    <location>
        <position position="876"/>
    </location>
</feature>
<feature type="glycosylation site" description="N-linked (GlcNAc...) asparagine" evidence="7">
    <location>
        <position position="973"/>
    </location>
</feature>
<feature type="disulfide bond" description="Interchain (between alpha-2-1 and delta-1 chains)" evidence="1">
    <location>
        <begin position="403"/>
        <end position="1047"/>
    </location>
</feature>
<sequence length="1091" mass="123823">MAAGCLLALTLTLFQSWLIGPSSEEPFPSPVTIKSWVDKMQEDLVTLAKTASGVTQLADIYEKYQDLYTVEPNNARQLVEIAARDIEKLLSNRSKALVRLAMEAEKVQAAHQWREDFASNEVVYYNAKDDLDPERNESESGSQRIKPVFIEDANFGRQISYQHAAVHIPTDIYEGSTIVLNELNWTSALDEVFKRNRDEDPTLLWQVFAADRLARYYPASPWVDNSRTPNKIDLYDVRRRPWYIQGAASPKDMLILVDVSGSVSGLTLKLIRTSVSEMLETLSDDDFVNVASFNSNAQDVSCFQHLVQANVRNKKVLKDAVNNITAKGITDYKKGFTFAFEQLLNYNVSRANCNKIIMLFTDGGEERAQEIFAKYNKDKKVRVFTFSVGQHNYDRGPIQWMACENKGYYYEIPSIGAIRINTQEYLDVLGRPMVLAGDKAKQVQWTNVYLDALELGLVITGTLPVFNVTGQSENKTNLKNQLILGVMGVDVSLEDIKRLTPRFTLCPNGYYFAIDPNGYVLLHPNLQPKNPKSQEPVTLDFLDAELENDIKVEIRNKMIDGESGEKTFRTLVKSQDERYIDKGNRTYTWTPVNGTDYRYLALVLPTYSFYYIKAKIEETITQARSKKGKMKDSETLKPDNFEESGYTFIAPREYCNDLKPSDNNTEFLLNFNEFIDRKTPNNPSCNTDLINRILLDAGFTNELVQNYWSKQKNIKGVKARFVVTDGGITRVYPKEAGENWQENPETYEDSFYKRSLDNDNYVFTAPYFNKSGPGAYESGIMVSKAVELYIQGKLLKPAVVGIKIDVNSWIENFTKTSIRDPCAGPVCDCKRNSDVMDCVILDDGGFLLMANHDDYTNQIGRFFGEIDPRMMRHLVNISLYAFNKSYDYQSVCDPGAAPKQGAGHRSAYVPSITDILQIGWWATAAAWSILQQLLLSLTFPRLLEAVEMEEDDFTASLSKQSCITEQTQYFFKNDTKSFSGLLDCGNCSRIFHVEKLMNTNLVFIMVESKGTCPCDTRLLMQAEQTSDGPDPCDMVKQPRYRKGPDVCFDNNVLEDYTDCGGVSGLNPSLWSIFGLQFILLWLVSGSRHYLW</sequence>
<comment type="function">
    <text evidence="2">The alpha-2/delta subunit of voltage-dependent calcium channels regulates calcium current density and activation/inactivation kinetics of the calcium channel (By similarity). Plays an important role in excitation-contraction coupling (By similarity).</text>
</comment>
<comment type="subunit">
    <text evidence="1">Dimer formed of alpha-2-1 and delta-1 chains; disulfide-linked. Voltage-dependent calcium channels are multisubunit complexes, consisting of alpha-1 (CACNA1), alpha-2 (CACNA2D), beta (CACNB) and delta (CACNA2D) subunits in a 1:1:1:1 ratio (By similarity).</text>
</comment>
<comment type="interaction">
    <interactant intactId="EBI-2466294">
        <id>P54290</id>
    </interactant>
    <interactant intactId="EBI-2466249">
        <id>P35442</id>
        <label>THBS2</label>
    </interactant>
    <organismsDiffer>true</organismsDiffer>
    <experiments>2</experiments>
</comment>
<comment type="subcellular location">
    <subcellularLocation>
        <location evidence="5">Membrane</location>
        <topology evidence="5">Single-pass type I membrane protein</topology>
    </subcellularLocation>
    <subcellularLocation>
        <location evidence="2">Cell membrane</location>
    </subcellularLocation>
</comment>
<comment type="alternative products">
    <event type="alternative splicing"/>
    <isoform>
        <id>P54290-1</id>
        <name>1</name>
        <sequence type="displayed"/>
    </isoform>
    <text>2 isoforms are produced.</text>
</comment>
<comment type="domain">
    <text evidence="1">The MIDAS-like motif in the VWFA domain binds divalent metal cations and is required to promote trafficking of the alpha-1 (CACNA1) subunit to the plasma membrane by an integrin-like switch.</text>
</comment>
<comment type="PTM">
    <text evidence="1">Proteolytically processed into subunits alpha-2-1 and delta-1 that are disulfide-linked.</text>
</comment>
<comment type="miscellaneous">
    <text evidence="1">Binds gabapentin, an antiepileptic drug.</text>
</comment>
<comment type="similarity">
    <text evidence="5">Belongs to the calcium channel subunit alpha-2/delta family.</text>
</comment>